<organism>
    <name type="scientific">Aliivibrio fischeri (strain ATCC 700601 / ES114)</name>
    <name type="common">Vibrio fischeri</name>
    <dbReference type="NCBI Taxonomy" id="312309"/>
    <lineage>
        <taxon>Bacteria</taxon>
        <taxon>Pseudomonadati</taxon>
        <taxon>Pseudomonadota</taxon>
        <taxon>Gammaproteobacteria</taxon>
        <taxon>Vibrionales</taxon>
        <taxon>Vibrionaceae</taxon>
        <taxon>Aliivibrio</taxon>
    </lineage>
</organism>
<sequence length="347" mass="37224">MRIEQELKLGFKDVLFRPKRSTLKSRSQVELTRDFTFKHSGRQWSGTPVIAANMDSVGSFAMAKALSEHGVMTAVHKHYTVADWAEFIKENDASVLKNAMVSTGTSEADFQKTKDIMALTDDLIFICIDIANGYSEHLVQYVEKVRAEFPDKVISAGNVVTGDMVEELILAGADIVKVGIGPGSVCTTRVKTGVGYPQLSAIIECADAAHGLGGRIIGDGGCSCAGDVSKAFGGGADFVMLGGMLAGHEESGGEVIEQDGKTFMKFYGMSSQSAMDKHSGGVAKYRAAEGKTVLLPFRGSVHNTISDILGGVRSTCTYVGAAKLKELTKRTTFIRVQEQENNVFGKE</sequence>
<gene>
    <name evidence="1" type="primary">guaC</name>
    <name type="ordered locus">VF_A0695</name>
</gene>
<dbReference type="EC" id="1.7.1.7" evidence="1"/>
<dbReference type="EMBL" id="CP000021">
    <property type="protein sequence ID" value="AAW87765.1"/>
    <property type="molecule type" value="Genomic_DNA"/>
</dbReference>
<dbReference type="RefSeq" id="WP_011263528.1">
    <property type="nucleotide sequence ID" value="NC_006841.2"/>
</dbReference>
<dbReference type="RefSeq" id="YP_206653.1">
    <property type="nucleotide sequence ID" value="NC_006841.2"/>
</dbReference>
<dbReference type="SMR" id="Q5DZN1"/>
<dbReference type="STRING" id="312309.VF_A0695"/>
<dbReference type="EnsemblBacteria" id="AAW87765">
    <property type="protein sequence ID" value="AAW87765"/>
    <property type="gene ID" value="VF_A0695"/>
</dbReference>
<dbReference type="GeneID" id="54166014"/>
<dbReference type="KEGG" id="vfi:VF_A0695"/>
<dbReference type="PATRIC" id="fig|312309.11.peg.3297"/>
<dbReference type="eggNOG" id="COG0516">
    <property type="taxonomic scope" value="Bacteria"/>
</dbReference>
<dbReference type="HOGENOM" id="CLU_022552_5_3_6"/>
<dbReference type="OrthoDB" id="9805398at2"/>
<dbReference type="Proteomes" id="UP000000537">
    <property type="component" value="Chromosome II"/>
</dbReference>
<dbReference type="GO" id="GO:0005829">
    <property type="term" value="C:cytosol"/>
    <property type="evidence" value="ECO:0007669"/>
    <property type="project" value="TreeGrafter"/>
</dbReference>
<dbReference type="GO" id="GO:1902560">
    <property type="term" value="C:GMP reductase complex"/>
    <property type="evidence" value="ECO:0007669"/>
    <property type="project" value="InterPro"/>
</dbReference>
<dbReference type="GO" id="GO:0003920">
    <property type="term" value="F:GMP reductase activity"/>
    <property type="evidence" value="ECO:0007669"/>
    <property type="project" value="UniProtKB-UniRule"/>
</dbReference>
<dbReference type="GO" id="GO:0046872">
    <property type="term" value="F:metal ion binding"/>
    <property type="evidence" value="ECO:0007669"/>
    <property type="project" value="UniProtKB-KW"/>
</dbReference>
<dbReference type="GO" id="GO:0006163">
    <property type="term" value="P:purine nucleotide metabolic process"/>
    <property type="evidence" value="ECO:0007669"/>
    <property type="project" value="UniProtKB-UniRule"/>
</dbReference>
<dbReference type="CDD" id="cd00381">
    <property type="entry name" value="IMPDH"/>
    <property type="match status" value="1"/>
</dbReference>
<dbReference type="FunFam" id="3.20.20.70:FF:000012">
    <property type="entry name" value="GMP reductase"/>
    <property type="match status" value="1"/>
</dbReference>
<dbReference type="Gene3D" id="3.20.20.70">
    <property type="entry name" value="Aldolase class I"/>
    <property type="match status" value="1"/>
</dbReference>
<dbReference type="HAMAP" id="MF_00596">
    <property type="entry name" value="GMP_reduct_type1"/>
    <property type="match status" value="1"/>
</dbReference>
<dbReference type="InterPro" id="IPR013785">
    <property type="entry name" value="Aldolase_TIM"/>
</dbReference>
<dbReference type="InterPro" id="IPR050139">
    <property type="entry name" value="GMP_reductase"/>
</dbReference>
<dbReference type="InterPro" id="IPR005993">
    <property type="entry name" value="GMPR"/>
</dbReference>
<dbReference type="InterPro" id="IPR015875">
    <property type="entry name" value="IMP_DH/GMP_Rdtase_CS"/>
</dbReference>
<dbReference type="InterPro" id="IPR001093">
    <property type="entry name" value="IMP_DH_GMPRt"/>
</dbReference>
<dbReference type="NCBIfam" id="TIGR01305">
    <property type="entry name" value="GMP_reduct_1"/>
    <property type="match status" value="1"/>
</dbReference>
<dbReference type="NCBIfam" id="NF003470">
    <property type="entry name" value="PRK05096.1"/>
    <property type="match status" value="1"/>
</dbReference>
<dbReference type="PANTHER" id="PTHR43170">
    <property type="entry name" value="GMP REDUCTASE"/>
    <property type="match status" value="1"/>
</dbReference>
<dbReference type="PANTHER" id="PTHR43170:SF5">
    <property type="entry name" value="GMP REDUCTASE"/>
    <property type="match status" value="1"/>
</dbReference>
<dbReference type="Pfam" id="PF00478">
    <property type="entry name" value="IMPDH"/>
    <property type="match status" value="1"/>
</dbReference>
<dbReference type="PIRSF" id="PIRSF000235">
    <property type="entry name" value="GMP_reductase"/>
    <property type="match status" value="1"/>
</dbReference>
<dbReference type="SMART" id="SM01240">
    <property type="entry name" value="IMPDH"/>
    <property type="match status" value="1"/>
</dbReference>
<dbReference type="SUPFAM" id="SSF51412">
    <property type="entry name" value="Inosine monophosphate dehydrogenase (IMPDH)"/>
    <property type="match status" value="1"/>
</dbReference>
<dbReference type="PROSITE" id="PS00487">
    <property type="entry name" value="IMP_DH_GMP_RED"/>
    <property type="match status" value="1"/>
</dbReference>
<proteinExistence type="inferred from homology"/>
<evidence type="ECO:0000255" key="1">
    <source>
        <dbReference type="HAMAP-Rule" id="MF_00596"/>
    </source>
</evidence>
<accession>Q5DZN1</accession>
<keyword id="KW-0479">Metal-binding</keyword>
<keyword id="KW-0521">NADP</keyword>
<keyword id="KW-0560">Oxidoreductase</keyword>
<keyword id="KW-0630">Potassium</keyword>
<keyword id="KW-1185">Reference proteome</keyword>
<name>GUAC_ALIF1</name>
<reference key="1">
    <citation type="journal article" date="2005" name="Proc. Natl. Acad. Sci. U.S.A.">
        <title>Complete genome sequence of Vibrio fischeri: a symbiotic bacterium with pathogenic congeners.</title>
        <authorList>
            <person name="Ruby E.G."/>
            <person name="Urbanowski M."/>
            <person name="Campbell J."/>
            <person name="Dunn A."/>
            <person name="Faini M."/>
            <person name="Gunsalus R."/>
            <person name="Lostroh P."/>
            <person name="Lupp C."/>
            <person name="McCann J."/>
            <person name="Millikan D."/>
            <person name="Schaefer A."/>
            <person name="Stabb E."/>
            <person name="Stevens A."/>
            <person name="Visick K."/>
            <person name="Whistler C."/>
            <person name="Greenberg E.P."/>
        </authorList>
    </citation>
    <scope>NUCLEOTIDE SEQUENCE [LARGE SCALE GENOMIC DNA]</scope>
    <source>
        <strain>ATCC 700601 / ES114</strain>
    </source>
</reference>
<comment type="function">
    <text evidence="1">Catalyzes the irreversible NADPH-dependent deamination of GMP to IMP. It functions in the conversion of nucleobase, nucleoside and nucleotide derivatives of G to A nucleotides, and in maintaining the intracellular balance of A and G nucleotides.</text>
</comment>
<comment type="catalytic activity">
    <reaction evidence="1">
        <text>IMP + NH4(+) + NADP(+) = GMP + NADPH + 2 H(+)</text>
        <dbReference type="Rhea" id="RHEA:17185"/>
        <dbReference type="ChEBI" id="CHEBI:15378"/>
        <dbReference type="ChEBI" id="CHEBI:28938"/>
        <dbReference type="ChEBI" id="CHEBI:57783"/>
        <dbReference type="ChEBI" id="CHEBI:58053"/>
        <dbReference type="ChEBI" id="CHEBI:58115"/>
        <dbReference type="ChEBI" id="CHEBI:58349"/>
        <dbReference type="EC" id="1.7.1.7"/>
    </reaction>
</comment>
<comment type="subunit">
    <text evidence="1">Homotetramer.</text>
</comment>
<comment type="similarity">
    <text evidence="1">Belongs to the IMPDH/GMPR family. GuaC type 1 subfamily.</text>
</comment>
<protein>
    <recommendedName>
        <fullName evidence="1">GMP reductase</fullName>
        <ecNumber evidence="1">1.7.1.7</ecNumber>
    </recommendedName>
    <alternativeName>
        <fullName evidence="1">Guanosine 5'-monophosphate oxidoreductase</fullName>
        <shortName evidence="1">Guanosine monophosphate reductase</shortName>
    </alternativeName>
</protein>
<feature type="chain" id="PRO_1000025622" description="GMP reductase">
    <location>
        <begin position="1"/>
        <end position="347"/>
    </location>
</feature>
<feature type="active site" description="Thioimidate intermediate" evidence="1">
    <location>
        <position position="186"/>
    </location>
</feature>
<feature type="binding site" evidence="1">
    <location>
        <begin position="108"/>
        <end position="131"/>
    </location>
    <ligand>
        <name>NADP(+)</name>
        <dbReference type="ChEBI" id="CHEBI:58349"/>
    </ligand>
</feature>
<feature type="binding site" evidence="1">
    <location>
        <position position="181"/>
    </location>
    <ligand>
        <name>K(+)</name>
        <dbReference type="ChEBI" id="CHEBI:29103"/>
    </ligand>
</feature>
<feature type="binding site" evidence="1">
    <location>
        <position position="183"/>
    </location>
    <ligand>
        <name>K(+)</name>
        <dbReference type="ChEBI" id="CHEBI:29103"/>
    </ligand>
</feature>
<feature type="binding site" evidence="1">
    <location>
        <begin position="216"/>
        <end position="239"/>
    </location>
    <ligand>
        <name>NADP(+)</name>
        <dbReference type="ChEBI" id="CHEBI:58349"/>
    </ligand>
</feature>